<dbReference type="EC" id="2.4.2.1" evidence="2"/>
<dbReference type="EMBL" id="AE003852">
    <property type="protein sequence ID" value="AAF95490.1"/>
    <property type="molecule type" value="Genomic_DNA"/>
</dbReference>
<dbReference type="PIR" id="C82087">
    <property type="entry name" value="C82087"/>
</dbReference>
<dbReference type="RefSeq" id="NP_231977.1">
    <property type="nucleotide sequence ID" value="NC_002505.1"/>
</dbReference>
<dbReference type="PDB" id="1VHJ">
    <property type="method" value="X-ray"/>
    <property type="resolution" value="2.23 A"/>
    <property type="chains" value="A/B/C/D/E/F=2-241"/>
</dbReference>
<dbReference type="PDB" id="1VHW">
    <property type="method" value="X-ray"/>
    <property type="resolution" value="1.54 A"/>
    <property type="chains" value="A/B/C/D/E/F=2-241"/>
</dbReference>
<dbReference type="PDB" id="3OF3">
    <property type="method" value="X-ray"/>
    <property type="resolution" value="1.83 A"/>
    <property type="chains" value="A/B/C/D/E/F/G/H/I/J/K/L=1-241"/>
</dbReference>
<dbReference type="PDBsum" id="1VHJ"/>
<dbReference type="PDBsum" id="1VHW"/>
<dbReference type="PDBsum" id="3OF3"/>
<dbReference type="SMR" id="Q9KPM0"/>
<dbReference type="STRING" id="243277.VC_2347"/>
<dbReference type="DNASU" id="2613143"/>
<dbReference type="EnsemblBacteria" id="AAF95490">
    <property type="protein sequence ID" value="AAF95490"/>
    <property type="gene ID" value="VC_2347"/>
</dbReference>
<dbReference type="KEGG" id="vch:VC_2347"/>
<dbReference type="PATRIC" id="fig|243277.26.peg.2234"/>
<dbReference type="eggNOG" id="COG0813">
    <property type="taxonomic scope" value="Bacteria"/>
</dbReference>
<dbReference type="HOGENOM" id="CLU_068457_2_0_6"/>
<dbReference type="EvolutionaryTrace" id="Q9KPM0"/>
<dbReference type="Proteomes" id="UP000000584">
    <property type="component" value="Chromosome 1"/>
</dbReference>
<dbReference type="GO" id="GO:0005829">
    <property type="term" value="C:cytosol"/>
    <property type="evidence" value="ECO:0000318"/>
    <property type="project" value="GO_Central"/>
</dbReference>
<dbReference type="GO" id="GO:0004731">
    <property type="term" value="F:purine-nucleoside phosphorylase activity"/>
    <property type="evidence" value="ECO:0000318"/>
    <property type="project" value="GO_Central"/>
</dbReference>
<dbReference type="GO" id="GO:0006152">
    <property type="term" value="P:purine nucleoside catabolic process"/>
    <property type="evidence" value="ECO:0000318"/>
    <property type="project" value="GO_Central"/>
</dbReference>
<dbReference type="CDD" id="cd09006">
    <property type="entry name" value="PNP_EcPNPI-like"/>
    <property type="match status" value="1"/>
</dbReference>
<dbReference type="FunFam" id="3.40.50.1580:FF:000002">
    <property type="entry name" value="Purine nucleoside phosphorylase DeoD-type"/>
    <property type="match status" value="1"/>
</dbReference>
<dbReference type="Gene3D" id="3.40.50.1580">
    <property type="entry name" value="Nucleoside phosphorylase domain"/>
    <property type="match status" value="1"/>
</dbReference>
<dbReference type="HAMAP" id="MF_01627">
    <property type="entry name" value="Pur_nucleosid_phosp"/>
    <property type="match status" value="1"/>
</dbReference>
<dbReference type="InterPro" id="IPR004402">
    <property type="entry name" value="DeoD-type"/>
</dbReference>
<dbReference type="InterPro" id="IPR018016">
    <property type="entry name" value="Nucleoside_phosphorylase_CS"/>
</dbReference>
<dbReference type="InterPro" id="IPR000845">
    <property type="entry name" value="Nucleoside_phosphorylase_d"/>
</dbReference>
<dbReference type="InterPro" id="IPR035994">
    <property type="entry name" value="Nucleoside_phosphorylase_sf"/>
</dbReference>
<dbReference type="NCBIfam" id="TIGR00107">
    <property type="entry name" value="deoD"/>
    <property type="match status" value="1"/>
</dbReference>
<dbReference type="NCBIfam" id="NF004489">
    <property type="entry name" value="PRK05819.1"/>
    <property type="match status" value="1"/>
</dbReference>
<dbReference type="NCBIfam" id="NF009914">
    <property type="entry name" value="PRK13374.1"/>
    <property type="match status" value="1"/>
</dbReference>
<dbReference type="PANTHER" id="PTHR43691:SF2">
    <property type="entry name" value="PURINE NUCLEOSIDE PHOSPHORYLASE DEOD-TYPE"/>
    <property type="match status" value="1"/>
</dbReference>
<dbReference type="PANTHER" id="PTHR43691">
    <property type="entry name" value="URIDINE PHOSPHORYLASE"/>
    <property type="match status" value="1"/>
</dbReference>
<dbReference type="Pfam" id="PF01048">
    <property type="entry name" value="PNP_UDP_1"/>
    <property type="match status" value="1"/>
</dbReference>
<dbReference type="SUPFAM" id="SSF53167">
    <property type="entry name" value="Purine and uridine phosphorylases"/>
    <property type="match status" value="1"/>
</dbReference>
<dbReference type="PROSITE" id="PS01232">
    <property type="entry name" value="PNP_UDP_1"/>
    <property type="match status" value="1"/>
</dbReference>
<gene>
    <name evidence="2" type="primary">deoD1</name>
    <name type="ordered locus">VC_2347</name>
</gene>
<comment type="function">
    <text evidence="2">Catalyzes the reversible phosphorolytic breakdown of the N-glycosidic bond in the beta-(deoxy)ribonucleoside molecules, with the formation of the corresponding free purine bases and pentose-1-phosphate.</text>
</comment>
<comment type="catalytic activity">
    <reaction evidence="2">
        <text>a purine D-ribonucleoside + phosphate = a purine nucleobase + alpha-D-ribose 1-phosphate</text>
        <dbReference type="Rhea" id="RHEA:19805"/>
        <dbReference type="ChEBI" id="CHEBI:26386"/>
        <dbReference type="ChEBI" id="CHEBI:43474"/>
        <dbReference type="ChEBI" id="CHEBI:57720"/>
        <dbReference type="ChEBI" id="CHEBI:142355"/>
        <dbReference type="EC" id="2.4.2.1"/>
    </reaction>
</comment>
<comment type="catalytic activity">
    <reaction evidence="2">
        <text>a purine 2'-deoxy-D-ribonucleoside + phosphate = a purine nucleobase + 2-deoxy-alpha-D-ribose 1-phosphate</text>
        <dbReference type="Rhea" id="RHEA:36431"/>
        <dbReference type="ChEBI" id="CHEBI:26386"/>
        <dbReference type="ChEBI" id="CHEBI:43474"/>
        <dbReference type="ChEBI" id="CHEBI:57259"/>
        <dbReference type="ChEBI" id="CHEBI:142361"/>
        <dbReference type="EC" id="2.4.2.1"/>
    </reaction>
</comment>
<comment type="subunit">
    <text evidence="2">Homohexamer; trimer of homodimers.</text>
</comment>
<comment type="similarity">
    <text evidence="2">Belongs to the PNP/UDP phosphorylase family.</text>
</comment>
<feature type="chain" id="PRO_0000063169" description="Purine nucleoside phosphorylase DeoD-type 1">
    <location>
        <begin position="1"/>
        <end position="241"/>
    </location>
</feature>
<feature type="active site" description="Proton donor" evidence="2">
    <location>
        <position position="205"/>
    </location>
</feature>
<feature type="binding site" evidence="3">
    <location>
        <position position="5"/>
    </location>
    <ligand>
        <name>a purine D-ribonucleoside</name>
        <dbReference type="ChEBI" id="CHEBI:142355"/>
        <note>ligand shared between dimeric partners</note>
    </ligand>
</feature>
<feature type="binding site" description="in other chain" evidence="4">
    <location>
        <position position="21"/>
    </location>
    <ligand>
        <name>phosphate</name>
        <dbReference type="ChEBI" id="CHEBI:43474"/>
        <note>ligand shared between dimeric partners</note>
    </ligand>
</feature>
<feature type="binding site" description="in other chain" evidence="4">
    <location>
        <position position="25"/>
    </location>
    <ligand>
        <name>phosphate</name>
        <dbReference type="ChEBI" id="CHEBI:43474"/>
        <note>ligand shared between dimeric partners</note>
    </ligand>
</feature>
<feature type="binding site" evidence="4">
    <location>
        <position position="44"/>
    </location>
    <ligand>
        <name>phosphate</name>
        <dbReference type="ChEBI" id="CHEBI:43474"/>
        <note>ligand shared between dimeric partners</note>
    </ligand>
</feature>
<feature type="binding site" description="in other chain" evidence="4">
    <location>
        <begin position="88"/>
        <end position="91"/>
    </location>
    <ligand>
        <name>phosphate</name>
        <dbReference type="ChEBI" id="CHEBI:43474"/>
        <note>ligand shared between dimeric partners</note>
    </ligand>
</feature>
<feature type="binding site" description="in other chain" evidence="3">
    <location>
        <begin position="180"/>
        <end position="182"/>
    </location>
    <ligand>
        <name>a purine D-ribonucleoside</name>
        <dbReference type="ChEBI" id="CHEBI:142355"/>
        <note>ligand shared between dimeric partners</note>
    </ligand>
</feature>
<feature type="binding site" description="in other chain" evidence="1">
    <location>
        <begin position="204"/>
        <end position="205"/>
    </location>
    <ligand>
        <name>a purine D-ribonucleoside</name>
        <dbReference type="ChEBI" id="CHEBI:142355"/>
        <note>ligand shared between dimeric partners</note>
    </ligand>
</feature>
<feature type="site" description="Important for catalytic activity" evidence="2">
    <location>
        <position position="218"/>
    </location>
</feature>
<feature type="strand" evidence="5">
    <location>
        <begin position="15"/>
        <end position="19"/>
    </location>
</feature>
<feature type="helix" evidence="5">
    <location>
        <begin position="23"/>
        <end position="33"/>
    </location>
</feature>
<feature type="strand" evidence="5">
    <location>
        <begin position="34"/>
        <end position="41"/>
    </location>
</feature>
<feature type="helix" evidence="5">
    <location>
        <begin position="43"/>
        <end position="45"/>
    </location>
</feature>
<feature type="strand" evidence="5">
    <location>
        <begin position="48"/>
        <end position="53"/>
    </location>
</feature>
<feature type="strand" evidence="5">
    <location>
        <begin position="56"/>
        <end position="61"/>
    </location>
</feature>
<feature type="helix" evidence="5">
    <location>
        <begin position="67"/>
        <end position="81"/>
    </location>
</feature>
<feature type="strand" evidence="5">
    <location>
        <begin position="85"/>
        <end position="94"/>
    </location>
</feature>
<feature type="strand" evidence="5">
    <location>
        <begin position="104"/>
        <end position="113"/>
    </location>
</feature>
<feature type="helix" evidence="5">
    <location>
        <begin position="116"/>
        <end position="120"/>
    </location>
</feature>
<feature type="turn" evidence="5">
    <location>
        <begin position="121"/>
        <end position="123"/>
    </location>
</feature>
<feature type="helix" evidence="5">
    <location>
        <begin position="132"/>
        <end position="144"/>
    </location>
</feature>
<feature type="strand" evidence="5">
    <location>
        <begin position="150"/>
        <end position="156"/>
    </location>
</feature>
<feature type="helix" evidence="5">
    <location>
        <begin position="166"/>
        <end position="173"/>
    </location>
</feature>
<feature type="strand" evidence="5">
    <location>
        <begin position="178"/>
        <end position="182"/>
    </location>
</feature>
<feature type="helix" evidence="5">
    <location>
        <begin position="183"/>
        <end position="193"/>
    </location>
</feature>
<feature type="strand" evidence="5">
    <location>
        <begin position="196"/>
        <end position="206"/>
    </location>
</feature>
<feature type="turn" evidence="5">
    <location>
        <begin position="207"/>
        <end position="209"/>
    </location>
</feature>
<feature type="helix" evidence="5">
    <location>
        <begin position="215"/>
        <end position="237"/>
    </location>
</feature>
<keyword id="KW-0002">3D-structure</keyword>
<keyword id="KW-0328">Glycosyltransferase</keyword>
<keyword id="KW-1185">Reference proteome</keyword>
<keyword id="KW-0808">Transferase</keyword>
<accession>Q9KPM0</accession>
<reference key="1">
    <citation type="journal article" date="2000" name="Nature">
        <title>DNA sequence of both chromosomes of the cholera pathogen Vibrio cholerae.</title>
        <authorList>
            <person name="Heidelberg J.F."/>
            <person name="Eisen J.A."/>
            <person name="Nelson W.C."/>
            <person name="Clayton R.A."/>
            <person name="Gwinn M.L."/>
            <person name="Dodson R.J."/>
            <person name="Haft D.H."/>
            <person name="Hickey E.K."/>
            <person name="Peterson J.D."/>
            <person name="Umayam L.A."/>
            <person name="Gill S.R."/>
            <person name="Nelson K.E."/>
            <person name="Read T.D."/>
            <person name="Tettelin H."/>
            <person name="Richardson D.L."/>
            <person name="Ermolaeva M.D."/>
            <person name="Vamathevan J.J."/>
            <person name="Bass S."/>
            <person name="Qin H."/>
            <person name="Dragoi I."/>
            <person name="Sellers P."/>
            <person name="McDonald L.A."/>
            <person name="Utterback T.R."/>
            <person name="Fleischmann R.D."/>
            <person name="Nierman W.C."/>
            <person name="White O."/>
            <person name="Salzberg S.L."/>
            <person name="Smith H.O."/>
            <person name="Colwell R.R."/>
            <person name="Mekalanos J.J."/>
            <person name="Venter J.C."/>
            <person name="Fraser C.M."/>
        </authorList>
    </citation>
    <scope>NUCLEOTIDE SEQUENCE [LARGE SCALE GENOMIC DNA]</scope>
    <source>
        <strain>ATCC 39315 / El Tor Inaba N16961</strain>
    </source>
</reference>
<reference key="2">
    <citation type="journal article" date="2005" name="Proteins">
        <title>Structural analysis of a set of proteins resulting from a bacterial genomics project.</title>
        <authorList>
            <person name="Badger J."/>
            <person name="Sauder J.M."/>
            <person name="Adams J.M."/>
            <person name="Antonysamy S."/>
            <person name="Bain K."/>
            <person name="Bergseid M.G."/>
            <person name="Buchanan S.G."/>
            <person name="Buchanan M.D."/>
            <person name="Batiyenko Y."/>
            <person name="Christopher J.A."/>
            <person name="Emtage S."/>
            <person name="Eroshkina A."/>
            <person name="Feil I."/>
            <person name="Furlong E.B."/>
            <person name="Gajiwala K.S."/>
            <person name="Gao X."/>
            <person name="He D."/>
            <person name="Hendle J."/>
            <person name="Huber A."/>
            <person name="Hoda K."/>
            <person name="Kearins P."/>
            <person name="Kissinger C."/>
            <person name="Laubert B."/>
            <person name="Lewis H.A."/>
            <person name="Lin J."/>
            <person name="Loomis K."/>
            <person name="Lorimer D."/>
            <person name="Louie G."/>
            <person name="Maletic M."/>
            <person name="Marsh C.D."/>
            <person name="Miller I."/>
            <person name="Molinari J."/>
            <person name="Muller-Dieckmann H.J."/>
            <person name="Newman J.M."/>
            <person name="Noland B.W."/>
            <person name="Pagarigan B."/>
            <person name="Park F."/>
            <person name="Peat T.S."/>
            <person name="Post K.W."/>
            <person name="Radojicic S."/>
            <person name="Ramos A."/>
            <person name="Romero R."/>
            <person name="Rutter M.E."/>
            <person name="Sanderson W.E."/>
            <person name="Schwinn K.D."/>
            <person name="Tresser J."/>
            <person name="Winhoven J."/>
            <person name="Wright T.A."/>
            <person name="Wu L."/>
            <person name="Xu J."/>
            <person name="Harris T.J.R."/>
        </authorList>
    </citation>
    <scope>X-RAY CRYSTALLOGRAPHY (1.54 ANGSTROMS) OF 2-241 IN COMPLEX WITH ADENOSINE</scope>
</reference>
<reference key="3">
    <citation type="submission" date="2010-08" db="PDB data bank">
        <title>Crystal structure of PNP with an inhibitor DADME_immH from Vibrio cholerae.</title>
        <authorList>
            <person name="Kim J."/>
            <person name="Ramagopal U.A."/>
            <person name="Burley S.K."/>
            <person name="Almo S.C."/>
        </authorList>
    </citation>
    <scope>X-RAY CRYSTALLOGRAPHY (1.83 ANGSTROMS) IN COMPLEX WITH PHOSPHATE</scope>
</reference>
<proteinExistence type="evidence at protein level"/>
<organism>
    <name type="scientific">Vibrio cholerae serotype O1 (strain ATCC 39315 / El Tor Inaba N16961)</name>
    <dbReference type="NCBI Taxonomy" id="243277"/>
    <lineage>
        <taxon>Bacteria</taxon>
        <taxon>Pseudomonadati</taxon>
        <taxon>Pseudomonadota</taxon>
        <taxon>Gammaproteobacteria</taxon>
        <taxon>Vibrionales</taxon>
        <taxon>Vibrionaceae</taxon>
        <taxon>Vibrio</taxon>
    </lineage>
</organism>
<sequence>MATPHINAQMGDFADVVLMPGDPLRAKYIAENFLDNAVQVCDVRNMFGYTGTYKGRKISVMGHGMGIPSCSIYVTELIKDYGVKKIIRVGSCGAVNEGIKVRDVVIGMGACTDSKVNRIRFKDHDFAAIADYKMVKAAEEAAKARGIDVKVGNLFSAELFYTPDPSMFDVMDKYGIVGVEMEAAGIYGVAAEYGAKALAICTVSDHIKTGEQTTSEERQNTFNEMIEIALDSVLIGDQAGY</sequence>
<evidence type="ECO:0000250" key="1">
    <source>
        <dbReference type="UniProtKB" id="P50389"/>
    </source>
</evidence>
<evidence type="ECO:0000255" key="2">
    <source>
        <dbReference type="HAMAP-Rule" id="MF_01627"/>
    </source>
</evidence>
<evidence type="ECO:0007744" key="3">
    <source>
        <dbReference type="PDB" id="1VHW"/>
    </source>
</evidence>
<evidence type="ECO:0007744" key="4">
    <source>
        <dbReference type="PDB" id="3OF3"/>
    </source>
</evidence>
<evidence type="ECO:0007829" key="5">
    <source>
        <dbReference type="PDB" id="1VHW"/>
    </source>
</evidence>
<name>DEOD1_VIBCH</name>
<protein>
    <recommendedName>
        <fullName evidence="2">Purine nucleoside phosphorylase DeoD-type 1</fullName>
        <shortName evidence="2">PNP 1</shortName>
        <ecNumber evidence="2">2.4.2.1</ecNumber>
    </recommendedName>
</protein>